<accession>P43396</accession>
<feature type="chain" id="PRO_0000197396" description="Metallothionein-like protein 1">
    <location>
        <begin position="1"/>
        <end position="80"/>
    </location>
</feature>
<name>MT1_COFAR</name>
<gene>
    <name type="primary">METAL1</name>
</gene>
<sequence length="80" mass="7914">MSCCGGNCGCGAGCKCSGGCGGCKMYPELSYTENTAAETLILGVAPPKTTYLEGAGEEAAAENGGCKCGPDCKCNPCNCK</sequence>
<comment type="function">
    <text>Metallothioneins have a high content of cysteine residues that bind various heavy metals.</text>
</comment>
<comment type="similarity">
    <text evidence="1">Belongs to the metallothionein superfamily. Type 15 family.</text>
</comment>
<reference key="1">
    <citation type="journal article" date="1995" name="Plant Physiol.">
        <title>A cDNA encoding a metallothionein I-like protein from coffee leaves (Coffea arabica).</title>
        <authorList>
            <person name="Moisyadi S."/>
            <person name="Stiles J.I."/>
        </authorList>
    </citation>
    <scope>NUCLEOTIDE SEQUENCE [MRNA]</scope>
    <source>
        <strain>cv. Guatemalan</strain>
        <tissue>Leaf</tissue>
    </source>
</reference>
<organism>
    <name type="scientific">Coffea arabica</name>
    <name type="common">Arabian coffee</name>
    <dbReference type="NCBI Taxonomy" id="13443"/>
    <lineage>
        <taxon>Eukaryota</taxon>
        <taxon>Viridiplantae</taxon>
        <taxon>Streptophyta</taxon>
        <taxon>Embryophyta</taxon>
        <taxon>Tracheophyta</taxon>
        <taxon>Spermatophyta</taxon>
        <taxon>Magnoliopsida</taxon>
        <taxon>eudicotyledons</taxon>
        <taxon>Gunneridae</taxon>
        <taxon>Pentapetalae</taxon>
        <taxon>asterids</taxon>
        <taxon>lamiids</taxon>
        <taxon>Gentianales</taxon>
        <taxon>Rubiaceae</taxon>
        <taxon>Ixoroideae</taxon>
        <taxon>Gardenieae complex</taxon>
        <taxon>Bertiereae - Coffeeae clade</taxon>
        <taxon>Coffeeae</taxon>
        <taxon>Coffea</taxon>
    </lineage>
</organism>
<proteinExistence type="inferred from homology"/>
<keyword id="KW-0479">Metal-binding</keyword>
<keyword id="KW-0480">Metal-thiolate cluster</keyword>
<keyword id="KW-1185">Reference proteome</keyword>
<evidence type="ECO:0000305" key="1"/>
<dbReference type="EMBL" id="U11423">
    <property type="protein sequence ID" value="AAA19611.1"/>
    <property type="molecule type" value="mRNA"/>
</dbReference>
<dbReference type="Allergome" id="10895">
    <property type="allergen name" value="Cof a 2"/>
</dbReference>
<dbReference type="Proteomes" id="UP000515148">
    <property type="component" value="Unplaced"/>
</dbReference>
<dbReference type="GO" id="GO:0046872">
    <property type="term" value="F:metal ion binding"/>
    <property type="evidence" value="ECO:0007669"/>
    <property type="project" value="UniProtKB-KW"/>
</dbReference>
<dbReference type="InterPro" id="IPR000347">
    <property type="entry name" value="Metalthion_15p"/>
</dbReference>
<dbReference type="PANTHER" id="PTHR33543">
    <property type="entry name" value="METALLOTHIONEIN-LIKE PROTEIN 2A"/>
    <property type="match status" value="1"/>
</dbReference>
<dbReference type="PANTHER" id="PTHR33543:SF33">
    <property type="entry name" value="METALLOTHIONEIN-LIKE PROTEIN 2B"/>
    <property type="match status" value="1"/>
</dbReference>
<dbReference type="Pfam" id="PF01439">
    <property type="entry name" value="Metallothio_2"/>
    <property type="match status" value="1"/>
</dbReference>
<protein>
    <recommendedName>
        <fullName>Metallothionein-like protein 1</fullName>
        <shortName>MT-1</shortName>
    </recommendedName>
</protein>